<proteinExistence type="evidence at protein level"/>
<accession>Q9FHR7</accession>
<dbReference type="EMBL" id="AB017070">
    <property type="protein sequence ID" value="BAB10592.1"/>
    <property type="molecule type" value="Genomic_DNA"/>
</dbReference>
<dbReference type="EMBL" id="CP002688">
    <property type="protein sequence ID" value="AED94939.1"/>
    <property type="molecule type" value="Genomic_DNA"/>
</dbReference>
<dbReference type="EMBL" id="BT010424">
    <property type="protein sequence ID" value="AAQ62425.1"/>
    <property type="molecule type" value="mRNA"/>
</dbReference>
<dbReference type="RefSeq" id="NP_199143.1">
    <property type="nucleotide sequence ID" value="NM_123695.3"/>
</dbReference>
<dbReference type="SMR" id="Q9FHR7"/>
<dbReference type="BioGRID" id="19597">
    <property type="interactions" value="4"/>
</dbReference>
<dbReference type="FunCoup" id="Q9FHR7">
    <property type="interactions" value="3"/>
</dbReference>
<dbReference type="IntAct" id="Q9FHR7">
    <property type="interactions" value="4"/>
</dbReference>
<dbReference type="STRING" id="3702.Q9FHR7"/>
<dbReference type="PaxDb" id="3702-AT5G43290.1"/>
<dbReference type="EnsemblPlants" id="AT5G43290.1">
    <property type="protein sequence ID" value="AT5G43290.1"/>
    <property type="gene ID" value="AT5G43290"/>
</dbReference>
<dbReference type="GeneID" id="834347"/>
<dbReference type="Gramene" id="AT5G43290.1">
    <property type="protein sequence ID" value="AT5G43290.1"/>
    <property type="gene ID" value="AT5G43290"/>
</dbReference>
<dbReference type="KEGG" id="ath:AT5G43290"/>
<dbReference type="Araport" id="AT5G43290"/>
<dbReference type="TAIR" id="AT5G43290">
    <property type="gene designation" value="WRKY49"/>
</dbReference>
<dbReference type="eggNOG" id="ENOG502R1XV">
    <property type="taxonomic scope" value="Eukaryota"/>
</dbReference>
<dbReference type="HOGENOM" id="CLU_057956_0_0_1"/>
<dbReference type="InParanoid" id="Q9FHR7"/>
<dbReference type="PhylomeDB" id="Q9FHR7"/>
<dbReference type="PRO" id="PR:Q9FHR7"/>
<dbReference type="Proteomes" id="UP000006548">
    <property type="component" value="Chromosome 5"/>
</dbReference>
<dbReference type="ExpressionAtlas" id="Q9FHR7">
    <property type="expression patterns" value="baseline and differential"/>
</dbReference>
<dbReference type="GO" id="GO:0005634">
    <property type="term" value="C:nucleus"/>
    <property type="evidence" value="ECO:0007669"/>
    <property type="project" value="UniProtKB-SubCell"/>
</dbReference>
<dbReference type="GO" id="GO:0003700">
    <property type="term" value="F:DNA-binding transcription factor activity"/>
    <property type="evidence" value="ECO:0000250"/>
    <property type="project" value="TAIR"/>
</dbReference>
<dbReference type="GO" id="GO:0000976">
    <property type="term" value="F:transcription cis-regulatory region binding"/>
    <property type="evidence" value="ECO:0000353"/>
    <property type="project" value="TAIR"/>
</dbReference>
<dbReference type="FunFam" id="2.20.25.80:FF:000016">
    <property type="match status" value="1"/>
</dbReference>
<dbReference type="Gene3D" id="2.20.25.80">
    <property type="entry name" value="WRKY domain"/>
    <property type="match status" value="1"/>
</dbReference>
<dbReference type="InterPro" id="IPR003657">
    <property type="entry name" value="WRKY_dom"/>
</dbReference>
<dbReference type="InterPro" id="IPR036576">
    <property type="entry name" value="WRKY_dom_sf"/>
</dbReference>
<dbReference type="InterPro" id="IPR044810">
    <property type="entry name" value="WRKY_plant"/>
</dbReference>
<dbReference type="PANTHER" id="PTHR31221:SF42">
    <property type="entry name" value="WRKY TRANSCRIPTION FACTOR 49-RELATED"/>
    <property type="match status" value="1"/>
</dbReference>
<dbReference type="PANTHER" id="PTHR31221">
    <property type="entry name" value="WRKY TRANSCRIPTION FACTOR PROTEIN 1-RELATED"/>
    <property type="match status" value="1"/>
</dbReference>
<dbReference type="Pfam" id="PF03106">
    <property type="entry name" value="WRKY"/>
    <property type="match status" value="1"/>
</dbReference>
<dbReference type="SMART" id="SM00774">
    <property type="entry name" value="WRKY"/>
    <property type="match status" value="1"/>
</dbReference>
<dbReference type="SUPFAM" id="SSF118290">
    <property type="entry name" value="WRKY DNA-binding domain"/>
    <property type="match status" value="1"/>
</dbReference>
<dbReference type="PROSITE" id="PS50811">
    <property type="entry name" value="WRKY"/>
    <property type="match status" value="1"/>
</dbReference>
<gene>
    <name type="primary">WRKY49</name>
    <name type="ordered locus">At5g43290</name>
    <name type="ORF">MNL12.11</name>
</gene>
<reference key="1">
    <citation type="journal article" date="1999" name="DNA Res.">
        <title>Structural analysis of Arabidopsis thaliana chromosome 5. IX. Sequence features of the regions of 1,011,550 bp covered by seventeen P1 and TAC clones.</title>
        <authorList>
            <person name="Kaneko T."/>
            <person name="Katoh T."/>
            <person name="Sato S."/>
            <person name="Nakamura Y."/>
            <person name="Asamizu E."/>
            <person name="Kotani H."/>
            <person name="Miyajima N."/>
            <person name="Tabata S."/>
        </authorList>
    </citation>
    <scope>NUCLEOTIDE SEQUENCE [LARGE SCALE GENOMIC DNA]</scope>
    <source>
        <strain>cv. Columbia</strain>
    </source>
</reference>
<reference key="2">
    <citation type="journal article" date="2017" name="Plant J.">
        <title>Araport11: a complete reannotation of the Arabidopsis thaliana reference genome.</title>
        <authorList>
            <person name="Cheng C.Y."/>
            <person name="Krishnakumar V."/>
            <person name="Chan A.P."/>
            <person name="Thibaud-Nissen F."/>
            <person name="Schobel S."/>
            <person name="Town C.D."/>
        </authorList>
    </citation>
    <scope>GENOME REANNOTATION</scope>
    <source>
        <strain>cv. Columbia</strain>
    </source>
</reference>
<reference key="3">
    <citation type="journal article" date="2003" name="Science">
        <title>Empirical analysis of transcriptional activity in the Arabidopsis genome.</title>
        <authorList>
            <person name="Yamada K."/>
            <person name="Lim J."/>
            <person name="Dale J.M."/>
            <person name="Chen H."/>
            <person name="Shinn P."/>
            <person name="Palm C.J."/>
            <person name="Southwick A.M."/>
            <person name="Wu H.C."/>
            <person name="Kim C.J."/>
            <person name="Nguyen M."/>
            <person name="Pham P.K."/>
            <person name="Cheuk R.F."/>
            <person name="Karlin-Newmann G."/>
            <person name="Liu S.X."/>
            <person name="Lam B."/>
            <person name="Sakano H."/>
            <person name="Wu T."/>
            <person name="Yu G."/>
            <person name="Miranda M."/>
            <person name="Quach H.L."/>
            <person name="Tripp M."/>
            <person name="Chang C.H."/>
            <person name="Lee J.M."/>
            <person name="Toriumi M.J."/>
            <person name="Chan M.M."/>
            <person name="Tang C.C."/>
            <person name="Onodera C.S."/>
            <person name="Deng J.M."/>
            <person name="Akiyama K."/>
            <person name="Ansari Y."/>
            <person name="Arakawa T."/>
            <person name="Banh J."/>
            <person name="Banno F."/>
            <person name="Bowser L."/>
            <person name="Brooks S.Y."/>
            <person name="Carninci P."/>
            <person name="Chao Q."/>
            <person name="Choy N."/>
            <person name="Enju A."/>
            <person name="Goldsmith A.D."/>
            <person name="Gurjal M."/>
            <person name="Hansen N.F."/>
            <person name="Hayashizaki Y."/>
            <person name="Johnson-Hopson C."/>
            <person name="Hsuan V.W."/>
            <person name="Iida K."/>
            <person name="Karnes M."/>
            <person name="Khan S."/>
            <person name="Koesema E."/>
            <person name="Ishida J."/>
            <person name="Jiang P.X."/>
            <person name="Jones T."/>
            <person name="Kawai J."/>
            <person name="Kamiya A."/>
            <person name="Meyers C."/>
            <person name="Nakajima M."/>
            <person name="Narusaka M."/>
            <person name="Seki M."/>
            <person name="Sakurai T."/>
            <person name="Satou M."/>
            <person name="Tamse R."/>
            <person name="Vaysberg M."/>
            <person name="Wallender E.K."/>
            <person name="Wong C."/>
            <person name="Yamamura Y."/>
            <person name="Yuan S."/>
            <person name="Shinozaki K."/>
            <person name="Davis R.W."/>
            <person name="Theologis A."/>
            <person name="Ecker J.R."/>
        </authorList>
    </citation>
    <scope>NUCLEOTIDE SEQUENCE [LARGE SCALE MRNA]</scope>
    <source>
        <strain>cv. Columbia</strain>
    </source>
</reference>
<protein>
    <recommendedName>
        <fullName>Probable WRKY transcription factor 49</fullName>
    </recommendedName>
    <alternativeName>
        <fullName>WRKY DNA-binding protein 49</fullName>
    </alternativeName>
</protein>
<feature type="chain" id="PRO_0000133690" description="Probable WRKY transcription factor 49">
    <location>
        <begin position="1"/>
        <end position="274"/>
    </location>
</feature>
<feature type="DNA-binding region" description="WRKY" evidence="3">
    <location>
        <begin position="108"/>
        <end position="173"/>
    </location>
</feature>
<feature type="region of interest" description="Disordered" evidence="4">
    <location>
        <begin position="188"/>
        <end position="228"/>
    </location>
</feature>
<feature type="coiled-coil region" evidence="2">
    <location>
        <begin position="193"/>
        <end position="222"/>
    </location>
</feature>
<feature type="compositionally biased region" description="Basic and acidic residues" evidence="4">
    <location>
        <begin position="195"/>
        <end position="213"/>
    </location>
</feature>
<feature type="compositionally biased region" description="Polar residues" evidence="4">
    <location>
        <begin position="216"/>
        <end position="228"/>
    </location>
</feature>
<organism>
    <name type="scientific">Arabidopsis thaliana</name>
    <name type="common">Mouse-ear cress</name>
    <dbReference type="NCBI Taxonomy" id="3702"/>
    <lineage>
        <taxon>Eukaryota</taxon>
        <taxon>Viridiplantae</taxon>
        <taxon>Streptophyta</taxon>
        <taxon>Embryophyta</taxon>
        <taxon>Tracheophyta</taxon>
        <taxon>Spermatophyta</taxon>
        <taxon>Magnoliopsida</taxon>
        <taxon>eudicotyledons</taxon>
        <taxon>Gunneridae</taxon>
        <taxon>Pentapetalae</taxon>
        <taxon>rosids</taxon>
        <taxon>malvids</taxon>
        <taxon>Brassicales</taxon>
        <taxon>Brassicaceae</taxon>
        <taxon>Camelineae</taxon>
        <taxon>Arabidopsis</taxon>
    </lineage>
</organism>
<keyword id="KW-0175">Coiled coil</keyword>
<keyword id="KW-0238">DNA-binding</keyword>
<keyword id="KW-0539">Nucleus</keyword>
<keyword id="KW-1185">Reference proteome</keyword>
<keyword id="KW-0804">Transcription</keyword>
<keyword id="KW-0805">Transcription regulation</keyword>
<sequence length="274" mass="31581">MEEEGYQWARRCGNNAVEDPFVYEPPLFFLPQDQHHMHGLMPNEDFIANKFVTSTLYSGPRIQDIANALALVEPLTHPVREISKSTVPLLERSTLSKVDRYTLKVKNNSNGMCDDGYKWRKYGQKSIKNSPNPRSYYKCTNPICNAKKQVERSIDESNTYIITYEGFHFHYTYPFFLPDKTRQWPNKKTKIHKHNAQDMNKKSQTQEESKEAQLGELTNQNHPVNKAQENTPANLEEGLFFPVDQCRPQQGLLEDVVAPAMKNIPTRDSVLTAS</sequence>
<comment type="function">
    <text evidence="1">Transcription factor. Interacts specifically with the W box (5'-(T)TGAC[CT]-3'), a frequently occurring elicitor-responsive cis-acting element (By similarity).</text>
</comment>
<comment type="interaction">
    <interactant intactId="EBI-15196471">
        <id>Q9FHR7</id>
    </interactant>
    <interactant intactId="EBI-15192297">
        <id>Q9LQF0</id>
        <label>TCP23</label>
    </interactant>
    <organismsDiffer>false</organismsDiffer>
    <experiments>3</experiments>
</comment>
<comment type="subcellular location">
    <subcellularLocation>
        <location evidence="5">Nucleus</location>
    </subcellularLocation>
</comment>
<comment type="similarity">
    <text evidence="5">Belongs to the WRKY group II-c family.</text>
</comment>
<evidence type="ECO:0000250" key="1"/>
<evidence type="ECO:0000255" key="2"/>
<evidence type="ECO:0000255" key="3">
    <source>
        <dbReference type="PROSITE-ProRule" id="PRU00223"/>
    </source>
</evidence>
<evidence type="ECO:0000256" key="4">
    <source>
        <dbReference type="SAM" id="MobiDB-lite"/>
    </source>
</evidence>
<evidence type="ECO:0000305" key="5"/>
<name>WRK49_ARATH</name>